<gene>
    <name evidence="1" type="primary">glmU</name>
    <name type="ordered locus">Dvul_0588</name>
</gene>
<comment type="function">
    <text evidence="1">Catalyzes the last two sequential reactions in the de novo biosynthetic pathway for UDP-N-acetylglucosamine (UDP-GlcNAc). The C-terminal domain catalyzes the transfer of acetyl group from acetyl coenzyme A to glucosamine-1-phosphate (GlcN-1-P) to produce N-acetylglucosamine-1-phosphate (GlcNAc-1-P), which is converted into UDP-GlcNAc by the transfer of uridine 5-monophosphate (from uridine 5-triphosphate), a reaction catalyzed by the N-terminal domain.</text>
</comment>
<comment type="catalytic activity">
    <reaction evidence="1">
        <text>alpha-D-glucosamine 1-phosphate + acetyl-CoA = N-acetyl-alpha-D-glucosamine 1-phosphate + CoA + H(+)</text>
        <dbReference type="Rhea" id="RHEA:13725"/>
        <dbReference type="ChEBI" id="CHEBI:15378"/>
        <dbReference type="ChEBI" id="CHEBI:57287"/>
        <dbReference type="ChEBI" id="CHEBI:57288"/>
        <dbReference type="ChEBI" id="CHEBI:57776"/>
        <dbReference type="ChEBI" id="CHEBI:58516"/>
        <dbReference type="EC" id="2.3.1.157"/>
    </reaction>
</comment>
<comment type="catalytic activity">
    <reaction evidence="1">
        <text>N-acetyl-alpha-D-glucosamine 1-phosphate + UTP + H(+) = UDP-N-acetyl-alpha-D-glucosamine + diphosphate</text>
        <dbReference type="Rhea" id="RHEA:13509"/>
        <dbReference type="ChEBI" id="CHEBI:15378"/>
        <dbReference type="ChEBI" id="CHEBI:33019"/>
        <dbReference type="ChEBI" id="CHEBI:46398"/>
        <dbReference type="ChEBI" id="CHEBI:57705"/>
        <dbReference type="ChEBI" id="CHEBI:57776"/>
        <dbReference type="EC" id="2.7.7.23"/>
    </reaction>
</comment>
<comment type="cofactor">
    <cofactor evidence="1">
        <name>Mg(2+)</name>
        <dbReference type="ChEBI" id="CHEBI:18420"/>
    </cofactor>
    <text evidence="1">Binds 1 Mg(2+) ion per subunit.</text>
</comment>
<comment type="pathway">
    <text evidence="1">Nucleotide-sugar biosynthesis; UDP-N-acetyl-alpha-D-glucosamine biosynthesis; N-acetyl-alpha-D-glucosamine 1-phosphate from alpha-D-glucosamine 6-phosphate (route II): step 2/2.</text>
</comment>
<comment type="pathway">
    <text evidence="1">Nucleotide-sugar biosynthesis; UDP-N-acetyl-alpha-D-glucosamine biosynthesis; UDP-N-acetyl-alpha-D-glucosamine from N-acetyl-alpha-D-glucosamine 1-phosphate: step 1/1.</text>
</comment>
<comment type="pathway">
    <text evidence="1">Bacterial outer membrane biogenesis; LPS lipid A biosynthesis.</text>
</comment>
<comment type="subunit">
    <text evidence="1">Homotrimer.</text>
</comment>
<comment type="subcellular location">
    <subcellularLocation>
        <location evidence="1">Cytoplasm</location>
    </subcellularLocation>
</comment>
<comment type="similarity">
    <text evidence="1">In the N-terminal section; belongs to the N-acetylglucosamine-1-phosphate uridyltransferase family.</text>
</comment>
<comment type="similarity">
    <text evidence="1">In the C-terminal section; belongs to the transferase hexapeptide repeat family.</text>
</comment>
<reference key="1">
    <citation type="journal article" date="2009" name="Environ. Microbiol.">
        <title>Contribution of mobile genetic elements to Desulfovibrio vulgaris genome plasticity.</title>
        <authorList>
            <person name="Walker C.B."/>
            <person name="Stolyar S."/>
            <person name="Chivian D."/>
            <person name="Pinel N."/>
            <person name="Gabster J.A."/>
            <person name="Dehal P.S."/>
            <person name="He Z."/>
            <person name="Yang Z.K."/>
            <person name="Yen H.C."/>
            <person name="Zhou J."/>
            <person name="Wall J.D."/>
            <person name="Hazen T.C."/>
            <person name="Arkin A.P."/>
            <person name="Stahl D.A."/>
        </authorList>
    </citation>
    <scope>NUCLEOTIDE SEQUENCE [LARGE SCALE GENOMIC DNA]</scope>
    <source>
        <strain>DP4</strain>
    </source>
</reference>
<name>GLMU_NITV4</name>
<accession>A1VAZ5</accession>
<organism>
    <name type="scientific">Nitratidesulfovibrio vulgaris (strain DP4)</name>
    <name type="common">Desulfovibrio vulgaris</name>
    <dbReference type="NCBI Taxonomy" id="391774"/>
    <lineage>
        <taxon>Bacteria</taxon>
        <taxon>Pseudomonadati</taxon>
        <taxon>Thermodesulfobacteriota</taxon>
        <taxon>Desulfovibrionia</taxon>
        <taxon>Desulfovibrionales</taxon>
        <taxon>Desulfovibrionaceae</taxon>
        <taxon>Nitratidesulfovibrio</taxon>
    </lineage>
</organism>
<dbReference type="EC" id="2.7.7.23" evidence="1"/>
<dbReference type="EC" id="2.3.1.157" evidence="1"/>
<dbReference type="EMBL" id="CP000527">
    <property type="protein sequence ID" value="ABM27611.1"/>
    <property type="molecule type" value="Genomic_DNA"/>
</dbReference>
<dbReference type="RefSeq" id="WP_011791709.1">
    <property type="nucleotide sequence ID" value="NC_008751.1"/>
</dbReference>
<dbReference type="SMR" id="A1VAZ5"/>
<dbReference type="KEGG" id="dvl:Dvul_0588"/>
<dbReference type="HOGENOM" id="CLU_029499_15_2_7"/>
<dbReference type="UniPathway" id="UPA00113">
    <property type="reaction ID" value="UER00532"/>
</dbReference>
<dbReference type="UniPathway" id="UPA00113">
    <property type="reaction ID" value="UER00533"/>
</dbReference>
<dbReference type="UniPathway" id="UPA00973"/>
<dbReference type="Proteomes" id="UP000009173">
    <property type="component" value="Chromosome"/>
</dbReference>
<dbReference type="GO" id="GO:0005737">
    <property type="term" value="C:cytoplasm"/>
    <property type="evidence" value="ECO:0007669"/>
    <property type="project" value="UniProtKB-SubCell"/>
</dbReference>
<dbReference type="GO" id="GO:0016020">
    <property type="term" value="C:membrane"/>
    <property type="evidence" value="ECO:0007669"/>
    <property type="project" value="GOC"/>
</dbReference>
<dbReference type="GO" id="GO:0019134">
    <property type="term" value="F:glucosamine-1-phosphate N-acetyltransferase activity"/>
    <property type="evidence" value="ECO:0007669"/>
    <property type="project" value="UniProtKB-UniRule"/>
</dbReference>
<dbReference type="GO" id="GO:0000287">
    <property type="term" value="F:magnesium ion binding"/>
    <property type="evidence" value="ECO:0007669"/>
    <property type="project" value="UniProtKB-UniRule"/>
</dbReference>
<dbReference type="GO" id="GO:0003977">
    <property type="term" value="F:UDP-N-acetylglucosamine diphosphorylase activity"/>
    <property type="evidence" value="ECO:0007669"/>
    <property type="project" value="UniProtKB-UniRule"/>
</dbReference>
<dbReference type="GO" id="GO:0000902">
    <property type="term" value="P:cell morphogenesis"/>
    <property type="evidence" value="ECO:0007669"/>
    <property type="project" value="UniProtKB-UniRule"/>
</dbReference>
<dbReference type="GO" id="GO:0071555">
    <property type="term" value="P:cell wall organization"/>
    <property type="evidence" value="ECO:0007669"/>
    <property type="project" value="UniProtKB-KW"/>
</dbReference>
<dbReference type="GO" id="GO:0009245">
    <property type="term" value="P:lipid A biosynthetic process"/>
    <property type="evidence" value="ECO:0007669"/>
    <property type="project" value="UniProtKB-UniRule"/>
</dbReference>
<dbReference type="GO" id="GO:0009252">
    <property type="term" value="P:peptidoglycan biosynthetic process"/>
    <property type="evidence" value="ECO:0007669"/>
    <property type="project" value="UniProtKB-UniRule"/>
</dbReference>
<dbReference type="GO" id="GO:0008360">
    <property type="term" value="P:regulation of cell shape"/>
    <property type="evidence" value="ECO:0007669"/>
    <property type="project" value="UniProtKB-KW"/>
</dbReference>
<dbReference type="GO" id="GO:0006048">
    <property type="term" value="P:UDP-N-acetylglucosamine biosynthetic process"/>
    <property type="evidence" value="ECO:0007669"/>
    <property type="project" value="UniProtKB-UniPathway"/>
</dbReference>
<dbReference type="CDD" id="cd02540">
    <property type="entry name" value="GT2_GlmU_N_bac"/>
    <property type="match status" value="1"/>
</dbReference>
<dbReference type="CDD" id="cd03353">
    <property type="entry name" value="LbH_GlmU_C"/>
    <property type="match status" value="1"/>
</dbReference>
<dbReference type="Gene3D" id="2.160.10.10">
    <property type="entry name" value="Hexapeptide repeat proteins"/>
    <property type="match status" value="1"/>
</dbReference>
<dbReference type="Gene3D" id="3.90.550.10">
    <property type="entry name" value="Spore Coat Polysaccharide Biosynthesis Protein SpsA, Chain A"/>
    <property type="match status" value="1"/>
</dbReference>
<dbReference type="HAMAP" id="MF_01631">
    <property type="entry name" value="GlmU"/>
    <property type="match status" value="1"/>
</dbReference>
<dbReference type="InterPro" id="IPR005882">
    <property type="entry name" value="Bifunctional_GlmU"/>
</dbReference>
<dbReference type="InterPro" id="IPR050065">
    <property type="entry name" value="GlmU-like"/>
</dbReference>
<dbReference type="InterPro" id="IPR038009">
    <property type="entry name" value="GlmU_C_LbH"/>
</dbReference>
<dbReference type="InterPro" id="IPR001451">
    <property type="entry name" value="Hexapep"/>
</dbReference>
<dbReference type="InterPro" id="IPR018357">
    <property type="entry name" value="Hexapep_transf_CS"/>
</dbReference>
<dbReference type="InterPro" id="IPR025877">
    <property type="entry name" value="MobA-like_NTP_Trfase"/>
</dbReference>
<dbReference type="InterPro" id="IPR029044">
    <property type="entry name" value="Nucleotide-diphossugar_trans"/>
</dbReference>
<dbReference type="InterPro" id="IPR011004">
    <property type="entry name" value="Trimer_LpxA-like_sf"/>
</dbReference>
<dbReference type="NCBIfam" id="TIGR01173">
    <property type="entry name" value="glmU"/>
    <property type="match status" value="1"/>
</dbReference>
<dbReference type="NCBIfam" id="NF010936">
    <property type="entry name" value="PRK14356.1"/>
    <property type="match status" value="1"/>
</dbReference>
<dbReference type="PANTHER" id="PTHR43584:SF3">
    <property type="entry name" value="BIFUNCTIONAL PROTEIN GLMU"/>
    <property type="match status" value="1"/>
</dbReference>
<dbReference type="PANTHER" id="PTHR43584">
    <property type="entry name" value="NUCLEOTIDYL TRANSFERASE"/>
    <property type="match status" value="1"/>
</dbReference>
<dbReference type="Pfam" id="PF00132">
    <property type="entry name" value="Hexapep"/>
    <property type="match status" value="1"/>
</dbReference>
<dbReference type="Pfam" id="PF12804">
    <property type="entry name" value="NTP_transf_3"/>
    <property type="match status" value="1"/>
</dbReference>
<dbReference type="SUPFAM" id="SSF53448">
    <property type="entry name" value="Nucleotide-diphospho-sugar transferases"/>
    <property type="match status" value="1"/>
</dbReference>
<dbReference type="SUPFAM" id="SSF51161">
    <property type="entry name" value="Trimeric LpxA-like enzymes"/>
    <property type="match status" value="1"/>
</dbReference>
<dbReference type="PROSITE" id="PS00101">
    <property type="entry name" value="HEXAPEP_TRANSFERASES"/>
    <property type="match status" value="1"/>
</dbReference>
<protein>
    <recommendedName>
        <fullName evidence="1">Bifunctional protein GlmU</fullName>
    </recommendedName>
    <domain>
        <recommendedName>
            <fullName evidence="1">UDP-N-acetylglucosamine pyrophosphorylase</fullName>
            <ecNumber evidence="1">2.7.7.23</ecNumber>
        </recommendedName>
        <alternativeName>
            <fullName evidence="1">N-acetylglucosamine-1-phosphate uridyltransferase</fullName>
        </alternativeName>
    </domain>
    <domain>
        <recommendedName>
            <fullName evidence="1">Glucosamine-1-phosphate N-acetyltransferase</fullName>
            <ecNumber evidence="1">2.3.1.157</ecNumber>
        </recommendedName>
    </domain>
</protein>
<sequence>MASTTGALILAAGKGTRMHSDKPKVLQTILGEPMLRFVMDALAPVFGDRVWTVVGHRADMIYAAFAGEDARFVVQEQQLGTGHALQMAWESLRAAGLDRVVVVNGDTPLLATETIDFFLKESAEADIAFMTLTLPDPGAYGRVVRHNGHVAAIVEAKDYDEALYGPEPSEINTGIYALRLDAVESLLPRLTNANRSGEYYITDLVGLAVAGRMNVLGIQCGEDPNLLGVNNPAELIRSEALLRTRLVIGHIEGGVLIHAPETVRISPRATIEPGAEIYGPCEIYGTSRIARGAVVHSHCWLRNAEVESGSEVKSFSHLEGATVGKGCSVGPFARLRPGAVLDEEARVGNFVEMKKARLHKGAKAGHLTYLGDADVGAGANIGAGTITCNYDGKNKHRTVIGAGAFIGSNTALVAPVTVGDGSLVGAGSVITKDVPEASLAIARGRQTNLPRKPKA</sequence>
<keyword id="KW-0012">Acyltransferase</keyword>
<keyword id="KW-0133">Cell shape</keyword>
<keyword id="KW-0961">Cell wall biogenesis/degradation</keyword>
<keyword id="KW-0963">Cytoplasm</keyword>
<keyword id="KW-0460">Magnesium</keyword>
<keyword id="KW-0479">Metal-binding</keyword>
<keyword id="KW-0511">Multifunctional enzyme</keyword>
<keyword id="KW-0548">Nucleotidyltransferase</keyword>
<keyword id="KW-0573">Peptidoglycan synthesis</keyword>
<keyword id="KW-0677">Repeat</keyword>
<keyword id="KW-0808">Transferase</keyword>
<feature type="chain" id="PRO_1000056153" description="Bifunctional protein GlmU">
    <location>
        <begin position="1"/>
        <end position="455"/>
    </location>
</feature>
<feature type="region of interest" description="Pyrophosphorylase" evidence="1">
    <location>
        <begin position="1"/>
        <end position="232"/>
    </location>
</feature>
<feature type="region of interest" description="Linker" evidence="1">
    <location>
        <begin position="233"/>
        <end position="253"/>
    </location>
</feature>
<feature type="region of interest" description="N-acetyltransferase" evidence="1">
    <location>
        <begin position="254"/>
        <end position="455"/>
    </location>
</feature>
<feature type="active site" description="Proton acceptor" evidence="1">
    <location>
        <position position="366"/>
    </location>
</feature>
<feature type="binding site" evidence="1">
    <location>
        <begin position="10"/>
        <end position="13"/>
    </location>
    <ligand>
        <name>UDP-N-acetyl-alpha-D-glucosamine</name>
        <dbReference type="ChEBI" id="CHEBI:57705"/>
    </ligand>
</feature>
<feature type="binding site" evidence="1">
    <location>
        <position position="24"/>
    </location>
    <ligand>
        <name>UDP-N-acetyl-alpha-D-glucosamine</name>
        <dbReference type="ChEBI" id="CHEBI:57705"/>
    </ligand>
</feature>
<feature type="binding site" evidence="1">
    <location>
        <position position="75"/>
    </location>
    <ligand>
        <name>UDP-N-acetyl-alpha-D-glucosamine</name>
        <dbReference type="ChEBI" id="CHEBI:57705"/>
    </ligand>
</feature>
<feature type="binding site" evidence="1">
    <location>
        <begin position="80"/>
        <end position="81"/>
    </location>
    <ligand>
        <name>UDP-N-acetyl-alpha-D-glucosamine</name>
        <dbReference type="ChEBI" id="CHEBI:57705"/>
    </ligand>
</feature>
<feature type="binding site" evidence="1">
    <location>
        <position position="106"/>
    </location>
    <ligand>
        <name>Mg(2+)</name>
        <dbReference type="ChEBI" id="CHEBI:18420"/>
    </ligand>
</feature>
<feature type="binding site" evidence="1">
    <location>
        <position position="141"/>
    </location>
    <ligand>
        <name>UDP-N-acetyl-alpha-D-glucosamine</name>
        <dbReference type="ChEBI" id="CHEBI:57705"/>
    </ligand>
</feature>
<feature type="binding site" evidence="1">
    <location>
        <position position="155"/>
    </location>
    <ligand>
        <name>UDP-N-acetyl-alpha-D-glucosamine</name>
        <dbReference type="ChEBI" id="CHEBI:57705"/>
    </ligand>
</feature>
<feature type="binding site" evidence="1">
    <location>
        <position position="172"/>
    </location>
    <ligand>
        <name>UDP-N-acetyl-alpha-D-glucosamine</name>
        <dbReference type="ChEBI" id="CHEBI:57705"/>
    </ligand>
</feature>
<feature type="binding site" evidence="1">
    <location>
        <position position="230"/>
    </location>
    <ligand>
        <name>Mg(2+)</name>
        <dbReference type="ChEBI" id="CHEBI:18420"/>
    </ligand>
</feature>
<feature type="binding site" evidence="1">
    <location>
        <position position="230"/>
    </location>
    <ligand>
        <name>UDP-N-acetyl-alpha-D-glucosamine</name>
        <dbReference type="ChEBI" id="CHEBI:57705"/>
    </ligand>
</feature>
<feature type="binding site" evidence="1">
    <location>
        <position position="336"/>
    </location>
    <ligand>
        <name>UDP-N-acetyl-alpha-D-glucosamine</name>
        <dbReference type="ChEBI" id="CHEBI:57705"/>
    </ligand>
</feature>
<feature type="binding site" evidence="1">
    <location>
        <position position="354"/>
    </location>
    <ligand>
        <name>UDP-N-acetyl-alpha-D-glucosamine</name>
        <dbReference type="ChEBI" id="CHEBI:57705"/>
    </ligand>
</feature>
<feature type="binding site" evidence="1">
    <location>
        <position position="369"/>
    </location>
    <ligand>
        <name>UDP-N-acetyl-alpha-D-glucosamine</name>
        <dbReference type="ChEBI" id="CHEBI:57705"/>
    </ligand>
</feature>
<feature type="binding site" evidence="1">
    <location>
        <position position="380"/>
    </location>
    <ligand>
        <name>UDP-N-acetyl-alpha-D-glucosamine</name>
        <dbReference type="ChEBI" id="CHEBI:57705"/>
    </ligand>
</feature>
<feature type="binding site" evidence="1">
    <location>
        <position position="383"/>
    </location>
    <ligand>
        <name>acetyl-CoA</name>
        <dbReference type="ChEBI" id="CHEBI:57288"/>
    </ligand>
</feature>
<feature type="binding site" evidence="1">
    <location>
        <begin position="389"/>
        <end position="390"/>
    </location>
    <ligand>
        <name>acetyl-CoA</name>
        <dbReference type="ChEBI" id="CHEBI:57288"/>
    </ligand>
</feature>
<feature type="binding site" evidence="1">
    <location>
        <position position="408"/>
    </location>
    <ligand>
        <name>acetyl-CoA</name>
        <dbReference type="ChEBI" id="CHEBI:57288"/>
    </ligand>
</feature>
<feature type="binding site" evidence="1">
    <location>
        <position position="426"/>
    </location>
    <ligand>
        <name>acetyl-CoA</name>
        <dbReference type="ChEBI" id="CHEBI:57288"/>
    </ligand>
</feature>
<feature type="binding site" evidence="1">
    <location>
        <position position="443"/>
    </location>
    <ligand>
        <name>acetyl-CoA</name>
        <dbReference type="ChEBI" id="CHEBI:57288"/>
    </ligand>
</feature>
<evidence type="ECO:0000255" key="1">
    <source>
        <dbReference type="HAMAP-Rule" id="MF_01631"/>
    </source>
</evidence>
<proteinExistence type="inferred from homology"/>